<accession>P97516</accession>
<organism>
    <name type="scientific">Phodopus sungorus</name>
    <name type="common">Striped hairy-footed hamster</name>
    <name type="synonym">Djungarian hamster</name>
    <dbReference type="NCBI Taxonomy" id="10044"/>
    <lineage>
        <taxon>Eukaryota</taxon>
        <taxon>Metazoa</taxon>
        <taxon>Chordata</taxon>
        <taxon>Craniata</taxon>
        <taxon>Vertebrata</taxon>
        <taxon>Euteleostomi</taxon>
        <taxon>Mammalia</taxon>
        <taxon>Eutheria</taxon>
        <taxon>Euarchontoglires</taxon>
        <taxon>Glires</taxon>
        <taxon>Rodentia</taxon>
        <taxon>Myomorpha</taxon>
        <taxon>Muroidea</taxon>
        <taxon>Cricetidae</taxon>
        <taxon>Cricetinae</taxon>
        <taxon>Phodopus</taxon>
    </lineage>
</organism>
<name>TEF_PHOSU</name>
<evidence type="ECO:0000250" key="1"/>
<evidence type="ECO:0000255" key="2">
    <source>
        <dbReference type="PROSITE-ProRule" id="PRU00978"/>
    </source>
</evidence>
<evidence type="ECO:0000256" key="3">
    <source>
        <dbReference type="SAM" id="MobiDB-lite"/>
    </source>
</evidence>
<evidence type="ECO:0000305" key="4"/>
<proteinExistence type="evidence at transcript level"/>
<sequence>LEEDESAAASTMAVSASLMPPIWDKTIPYDGESFHLEYMDLDEFLLENGIPASPTHLAQNLLLPVAELEGKESASSSTASPPSSSTAVFQPSETVSSTESSLEKERETPSPIDPNCVEVDVNFNPDPADLVLSSVPGGELFNPRKHKFAEEDLKPQPMIKKAKKVFVPDEQKDEKYWTRRKKNNVAAKRSRDARRLKENQITIRAAFLEKENTALRTEVAD</sequence>
<protein>
    <recommendedName>
        <fullName>Thyrotroph embryonic factor</fullName>
    </recommendedName>
</protein>
<reference key="1">
    <citation type="submission" date="1997-02" db="EMBL/GenBank/DDBJ databases">
        <authorList>
            <person name="Bockmann J."/>
        </authorList>
    </citation>
    <scope>NUCLEOTIDE SEQUENCE [MRNA]</scope>
</reference>
<feature type="chain" id="PRO_0000076514" description="Thyrotroph embryonic factor">
    <location>
        <begin position="1" status="less than"/>
        <end position="221" status="greater than"/>
    </location>
</feature>
<feature type="domain" description="bZIP" evidence="2">
    <location>
        <begin position="173"/>
        <end position="221"/>
    </location>
</feature>
<feature type="region of interest" description="Disordered" evidence="3">
    <location>
        <begin position="72"/>
        <end position="116"/>
    </location>
</feature>
<feature type="region of interest" description="Basic motif" evidence="2">
    <location>
        <begin position="175"/>
        <end position="195"/>
    </location>
</feature>
<feature type="region of interest" description="Leucine-zipper" evidence="2">
    <location>
        <begin position="196"/>
        <end position="203"/>
    </location>
</feature>
<feature type="compositionally biased region" description="Low complexity" evidence="3">
    <location>
        <begin position="73"/>
        <end position="100"/>
    </location>
</feature>
<feature type="non-terminal residue">
    <location>
        <position position="1"/>
    </location>
</feature>
<feature type="non-terminal residue">
    <location>
        <position position="221"/>
    </location>
</feature>
<comment type="function">
    <text evidence="1">Transcription factor that binds to and transactivates the TSHB promoter. Binds to a minimal DNA-binding sequence 5'-[TC][AG][AG]TTA[TC][AG]-3' (By similarity).</text>
</comment>
<comment type="subunit">
    <text evidence="1">Binds DNA as a homodimer or a heterodimer. Can form a heterodimer with DBP (By similarity).</text>
</comment>
<comment type="subcellular location">
    <subcellularLocation>
        <location evidence="2">Nucleus</location>
    </subcellularLocation>
</comment>
<comment type="induction">
    <text>Accumulates according to a robust circadian rhythm.</text>
</comment>
<comment type="similarity">
    <text evidence="4">Belongs to the bZIP family. PAR subfamily.</text>
</comment>
<dbReference type="EMBL" id="Y11149">
    <property type="protein sequence ID" value="CAA72036.1"/>
    <property type="molecule type" value="mRNA"/>
</dbReference>
<dbReference type="SMR" id="P97516"/>
<dbReference type="GO" id="GO:0005634">
    <property type="term" value="C:nucleus"/>
    <property type="evidence" value="ECO:0007669"/>
    <property type="project" value="UniProtKB-SubCell"/>
</dbReference>
<dbReference type="GO" id="GO:0000981">
    <property type="term" value="F:DNA-binding transcription factor activity, RNA polymerase II-specific"/>
    <property type="evidence" value="ECO:0007669"/>
    <property type="project" value="TreeGrafter"/>
</dbReference>
<dbReference type="GO" id="GO:0000978">
    <property type="term" value="F:RNA polymerase II cis-regulatory region sequence-specific DNA binding"/>
    <property type="evidence" value="ECO:0007669"/>
    <property type="project" value="TreeGrafter"/>
</dbReference>
<dbReference type="GO" id="GO:0048511">
    <property type="term" value="P:rhythmic process"/>
    <property type="evidence" value="ECO:0007669"/>
    <property type="project" value="UniProtKB-KW"/>
</dbReference>
<dbReference type="CDD" id="cd14695">
    <property type="entry name" value="bZIP_HLF"/>
    <property type="match status" value="1"/>
</dbReference>
<dbReference type="FunFam" id="1.20.5.170:FF:000007">
    <property type="entry name" value="hepatic leukemia factor isoform X2"/>
    <property type="match status" value="1"/>
</dbReference>
<dbReference type="Gene3D" id="1.20.5.170">
    <property type="match status" value="1"/>
</dbReference>
<dbReference type="InterPro" id="IPR004827">
    <property type="entry name" value="bZIP"/>
</dbReference>
<dbReference type="InterPro" id="IPR046347">
    <property type="entry name" value="bZIP_sf"/>
</dbReference>
<dbReference type="InterPro" id="IPR040223">
    <property type="entry name" value="PAR_bZIP"/>
</dbReference>
<dbReference type="PANTHER" id="PTHR11988:SF24">
    <property type="entry name" value="THYROTROPH EMBRYONIC FACTOR"/>
    <property type="match status" value="1"/>
</dbReference>
<dbReference type="PANTHER" id="PTHR11988">
    <property type="entry name" value="THYROTROPH EMBRYONIC FACTOR RELATED"/>
    <property type="match status" value="1"/>
</dbReference>
<dbReference type="Pfam" id="PF07716">
    <property type="entry name" value="bZIP_2"/>
    <property type="match status" value="1"/>
</dbReference>
<dbReference type="SMART" id="SM00338">
    <property type="entry name" value="BRLZ"/>
    <property type="match status" value="1"/>
</dbReference>
<dbReference type="SUPFAM" id="SSF57959">
    <property type="entry name" value="Leucine zipper domain"/>
    <property type="match status" value="1"/>
</dbReference>
<dbReference type="PROSITE" id="PS50217">
    <property type="entry name" value="BZIP"/>
    <property type="match status" value="1"/>
</dbReference>
<gene>
    <name type="primary">TEF</name>
</gene>
<keyword id="KW-0010">Activator</keyword>
<keyword id="KW-0090">Biological rhythms</keyword>
<keyword id="KW-0238">DNA-binding</keyword>
<keyword id="KW-0539">Nucleus</keyword>
<keyword id="KW-0804">Transcription</keyword>
<keyword id="KW-0805">Transcription regulation</keyword>